<reference key="1">
    <citation type="journal article" date="2005" name="Science">
        <title>Genome sequence of the PCE-dechlorinating bacterium Dehalococcoides ethenogenes.</title>
        <authorList>
            <person name="Seshadri R."/>
            <person name="Adrian L."/>
            <person name="Fouts D.E."/>
            <person name="Eisen J.A."/>
            <person name="Phillippy A.M."/>
            <person name="Methe B.A."/>
            <person name="Ward N.L."/>
            <person name="Nelson W.C."/>
            <person name="DeBoy R.T."/>
            <person name="Khouri H.M."/>
            <person name="Kolonay J.F."/>
            <person name="Dodson R.J."/>
            <person name="Daugherty S.C."/>
            <person name="Brinkac L.M."/>
            <person name="Sullivan S.A."/>
            <person name="Madupu R."/>
            <person name="Nelson K.E."/>
            <person name="Kang K.H."/>
            <person name="Impraim M."/>
            <person name="Tran K."/>
            <person name="Robinson J.M."/>
            <person name="Forberger H.A."/>
            <person name="Fraser C.M."/>
            <person name="Zinder S.H."/>
            <person name="Heidelberg J.F."/>
        </authorList>
    </citation>
    <scope>NUCLEOTIDE SEQUENCE [LARGE SCALE GENOMIC DNA]</scope>
    <source>
        <strain>ATCC BAA-2266 / KCTC 15142 / 195</strain>
    </source>
</reference>
<protein>
    <recommendedName>
        <fullName evidence="1">D-aminoacyl-tRNA deacylase</fullName>
        <shortName evidence="1">DTD</shortName>
        <ecNumber evidence="1">3.1.1.96</ecNumber>
    </recommendedName>
    <alternativeName>
        <fullName evidence="1">Gly-tRNA(Ala) deacylase</fullName>
    </alternativeName>
</protein>
<accession>Q3ZAH5</accession>
<proteinExistence type="inferred from homology"/>
<keyword id="KW-0963">Cytoplasm</keyword>
<keyword id="KW-0378">Hydrolase</keyword>
<keyword id="KW-0694">RNA-binding</keyword>
<keyword id="KW-0820">tRNA-binding</keyword>
<dbReference type="EC" id="3.1.1.96" evidence="1"/>
<dbReference type="EMBL" id="CP000027">
    <property type="protein sequence ID" value="AAW39149.1"/>
    <property type="molecule type" value="Genomic_DNA"/>
</dbReference>
<dbReference type="RefSeq" id="WP_010935829.1">
    <property type="nucleotide sequence ID" value="NC_002936.3"/>
</dbReference>
<dbReference type="SMR" id="Q3ZAH5"/>
<dbReference type="FunCoup" id="Q3ZAH5">
    <property type="interactions" value="268"/>
</dbReference>
<dbReference type="STRING" id="243164.DET0019"/>
<dbReference type="GeneID" id="3229107"/>
<dbReference type="KEGG" id="det:DET0019"/>
<dbReference type="PATRIC" id="fig|243164.10.peg.18"/>
<dbReference type="eggNOG" id="COG1490">
    <property type="taxonomic scope" value="Bacteria"/>
</dbReference>
<dbReference type="HOGENOM" id="CLU_076901_1_0_0"/>
<dbReference type="InParanoid" id="Q3ZAH5"/>
<dbReference type="Proteomes" id="UP000008289">
    <property type="component" value="Chromosome"/>
</dbReference>
<dbReference type="GO" id="GO:0005737">
    <property type="term" value="C:cytoplasm"/>
    <property type="evidence" value="ECO:0007669"/>
    <property type="project" value="UniProtKB-SubCell"/>
</dbReference>
<dbReference type="GO" id="GO:0051500">
    <property type="term" value="F:D-tyrosyl-tRNA(Tyr) deacylase activity"/>
    <property type="evidence" value="ECO:0007669"/>
    <property type="project" value="TreeGrafter"/>
</dbReference>
<dbReference type="GO" id="GO:0106026">
    <property type="term" value="F:Gly-tRNA(Ala) deacylase activity"/>
    <property type="evidence" value="ECO:0007669"/>
    <property type="project" value="UniProtKB-UniRule"/>
</dbReference>
<dbReference type="GO" id="GO:0043908">
    <property type="term" value="F:Ser(Gly)-tRNA(Ala) hydrolase activity"/>
    <property type="evidence" value="ECO:0007669"/>
    <property type="project" value="UniProtKB-UniRule"/>
</dbReference>
<dbReference type="GO" id="GO:0000049">
    <property type="term" value="F:tRNA binding"/>
    <property type="evidence" value="ECO:0007669"/>
    <property type="project" value="UniProtKB-UniRule"/>
</dbReference>
<dbReference type="GO" id="GO:0019478">
    <property type="term" value="P:D-amino acid catabolic process"/>
    <property type="evidence" value="ECO:0007669"/>
    <property type="project" value="UniProtKB-UniRule"/>
</dbReference>
<dbReference type="CDD" id="cd00563">
    <property type="entry name" value="Dtyr_deacylase"/>
    <property type="match status" value="1"/>
</dbReference>
<dbReference type="FunFam" id="3.50.80.10:FF:000001">
    <property type="entry name" value="D-aminoacyl-tRNA deacylase"/>
    <property type="match status" value="1"/>
</dbReference>
<dbReference type="Gene3D" id="3.50.80.10">
    <property type="entry name" value="D-tyrosyl-tRNA(Tyr) deacylase"/>
    <property type="match status" value="1"/>
</dbReference>
<dbReference type="HAMAP" id="MF_00518">
    <property type="entry name" value="Deacylase_Dtd"/>
    <property type="match status" value="1"/>
</dbReference>
<dbReference type="InterPro" id="IPR003732">
    <property type="entry name" value="Daa-tRNA_deacyls_DTD"/>
</dbReference>
<dbReference type="InterPro" id="IPR023509">
    <property type="entry name" value="DTD-like_sf"/>
</dbReference>
<dbReference type="NCBIfam" id="TIGR00256">
    <property type="entry name" value="D-aminoacyl-tRNA deacylase"/>
    <property type="match status" value="1"/>
</dbReference>
<dbReference type="PANTHER" id="PTHR10472:SF5">
    <property type="entry name" value="D-AMINOACYL-TRNA DEACYLASE 1"/>
    <property type="match status" value="1"/>
</dbReference>
<dbReference type="PANTHER" id="PTHR10472">
    <property type="entry name" value="D-TYROSYL-TRNA TYR DEACYLASE"/>
    <property type="match status" value="1"/>
</dbReference>
<dbReference type="Pfam" id="PF02580">
    <property type="entry name" value="Tyr_Deacylase"/>
    <property type="match status" value="1"/>
</dbReference>
<dbReference type="SUPFAM" id="SSF69500">
    <property type="entry name" value="DTD-like"/>
    <property type="match status" value="1"/>
</dbReference>
<comment type="function">
    <text evidence="1">An aminoacyl-tRNA editing enzyme that deacylates mischarged D-aminoacyl-tRNAs. Also deacylates mischarged glycyl-tRNA(Ala), protecting cells against glycine mischarging by AlaRS. Acts via tRNA-based rather than protein-based catalysis; rejects L-amino acids rather than detecting D-amino acids in the active site. By recycling D-aminoacyl-tRNA to D-amino acids and free tRNA molecules, this enzyme counteracts the toxicity associated with the formation of D-aminoacyl-tRNA entities in vivo and helps enforce protein L-homochirality.</text>
</comment>
<comment type="catalytic activity">
    <reaction evidence="1">
        <text>glycyl-tRNA(Ala) + H2O = tRNA(Ala) + glycine + H(+)</text>
        <dbReference type="Rhea" id="RHEA:53744"/>
        <dbReference type="Rhea" id="RHEA-COMP:9657"/>
        <dbReference type="Rhea" id="RHEA-COMP:13640"/>
        <dbReference type="ChEBI" id="CHEBI:15377"/>
        <dbReference type="ChEBI" id="CHEBI:15378"/>
        <dbReference type="ChEBI" id="CHEBI:57305"/>
        <dbReference type="ChEBI" id="CHEBI:78442"/>
        <dbReference type="ChEBI" id="CHEBI:78522"/>
        <dbReference type="EC" id="3.1.1.96"/>
    </reaction>
</comment>
<comment type="catalytic activity">
    <reaction evidence="1">
        <text>a D-aminoacyl-tRNA + H2O = a tRNA + a D-alpha-amino acid + H(+)</text>
        <dbReference type="Rhea" id="RHEA:13953"/>
        <dbReference type="Rhea" id="RHEA-COMP:10123"/>
        <dbReference type="Rhea" id="RHEA-COMP:10124"/>
        <dbReference type="ChEBI" id="CHEBI:15377"/>
        <dbReference type="ChEBI" id="CHEBI:15378"/>
        <dbReference type="ChEBI" id="CHEBI:59871"/>
        <dbReference type="ChEBI" id="CHEBI:78442"/>
        <dbReference type="ChEBI" id="CHEBI:79333"/>
        <dbReference type="EC" id="3.1.1.96"/>
    </reaction>
</comment>
<comment type="subunit">
    <text evidence="1">Homodimer.</text>
</comment>
<comment type="subcellular location">
    <subcellularLocation>
        <location evidence="1">Cytoplasm</location>
    </subcellularLocation>
</comment>
<comment type="domain">
    <text evidence="1">A Gly-cisPro motif from one monomer fits into the active site of the other monomer to allow specific chiral rejection of L-amino acids.</text>
</comment>
<comment type="similarity">
    <text evidence="1">Belongs to the DTD family.</text>
</comment>
<evidence type="ECO:0000255" key="1">
    <source>
        <dbReference type="HAMAP-Rule" id="MF_00518"/>
    </source>
</evidence>
<name>DTD_DEHM1</name>
<gene>
    <name evidence="1" type="primary">dtd</name>
    <name type="ordered locus">DET0019</name>
</gene>
<sequence length="153" mass="16704">MKAVIQRVSRASVMVGGDTVGEIGPGLAVLLGVAEGDTQADAEYLVSKIINLRIFADGEGKFNLSLKDLCRELLVVSQFTLIADTRKGRRPSFVEAAQPEEADRLYNLFIRLCRGEGVQAATGKFGAMMMLEIHNDGPVTIILDSRDRLNPRQ</sequence>
<organism>
    <name type="scientific">Dehalococcoides mccartyi (strain ATCC BAA-2266 / KCTC 15142 / 195)</name>
    <name type="common">Dehalococcoides ethenogenes (strain 195)</name>
    <dbReference type="NCBI Taxonomy" id="243164"/>
    <lineage>
        <taxon>Bacteria</taxon>
        <taxon>Bacillati</taxon>
        <taxon>Chloroflexota</taxon>
        <taxon>Dehalococcoidia</taxon>
        <taxon>Dehalococcoidales</taxon>
        <taxon>Dehalococcoidaceae</taxon>
        <taxon>Dehalococcoides</taxon>
    </lineage>
</organism>
<feature type="chain" id="PRO_0000259277" description="D-aminoacyl-tRNA deacylase">
    <location>
        <begin position="1"/>
        <end position="153"/>
    </location>
</feature>
<feature type="short sequence motif" description="Gly-cisPro motif, important for rejection of L-amino acids" evidence="1">
    <location>
        <begin position="137"/>
        <end position="138"/>
    </location>
</feature>